<protein>
    <recommendedName>
        <fullName evidence="4">8-demethyl-8-alpha-L-rhamnosyl tetracenomycin-C 2'-O-methyltransferase</fullName>
        <ecNumber evidence="2">2.1.1.305</ecNumber>
    </recommendedName>
    <alternativeName>
        <fullName evidence="3">O-methyltransferase I</fullName>
    </alternativeName>
</protein>
<sequence length="378" mass="41180">MDSPQVARTLVDSAGGTAAHTREAIRQIGVPETAAFLADELAGRTETVTIRHAAEVQFVFDDRYAPDAADPVPWTFRVGPEGVTHRAGALPDPGAVVTQDLTELARSLYGPAADRSDATRTVWWRDHDDPRVYFDPPPVFPAVERLLAAADGRDVPGLAGLALRHGSDKWGIHTYTAAYEQHFAPFRDRAVTVVEIGVGGYDDPAAGGGSLRMWKRYFRRGLVYGVDIADKSRHREPRVHTVVADQSDPASLRDLADAIGPIDIVIDDGSHISAHVVTAFSTLFPRLNPGGLYVVEDLQTSYWPAFQGAYDDDTRTSVGFLKRLVDGLHHAEYPSRAGRPAQPTDRTVGSLHFHPNLAFVEKRANSGHGGISRLREAT</sequence>
<comment type="function">
    <text evidence="2">O-methyltransferase involved in the biosynthesis of the permethylated L-rhamnose moiety of elloramycin, an antitumor polyketide. Mediates the methylation of the hydroxy groups at the 2'-position after the sugar moiety has been attached to the aglycon.</text>
</comment>
<comment type="catalytic activity">
    <reaction evidence="2">
        <text>8-demethyl-8-alpha-L-rhamnosyl-tetracenomycin C + S-adenosyl-L-methionine = 8-demethyl-8-(2-O-methyl-alpha-L-rhamnosyl)-tetracenomycin C + S-adenosyl-L-homocysteine + H(+)</text>
        <dbReference type="Rhea" id="RHEA:41540"/>
        <dbReference type="ChEBI" id="CHEBI:15378"/>
        <dbReference type="ChEBI" id="CHEBI:57856"/>
        <dbReference type="ChEBI" id="CHEBI:59789"/>
        <dbReference type="ChEBI" id="CHEBI:78283"/>
        <dbReference type="ChEBI" id="CHEBI:78285"/>
        <dbReference type="EC" id="2.1.1.305"/>
    </reaction>
</comment>
<comment type="cofactor">
    <cofactor evidence="1">
        <name>Mg(2+)</name>
        <dbReference type="ChEBI" id="CHEBI:18420"/>
    </cofactor>
</comment>
<comment type="pathway">
    <text evidence="4">Antibiotic biosynthesis.</text>
</comment>
<comment type="similarity">
    <text evidence="4">Belongs to the methyltransferase OleY/MycE family.</text>
</comment>
<keyword id="KW-0045">Antibiotic biosynthesis</keyword>
<keyword id="KW-0460">Magnesium</keyword>
<keyword id="KW-0479">Metal-binding</keyword>
<keyword id="KW-0489">Methyltransferase</keyword>
<keyword id="KW-0949">S-adenosyl-L-methionine</keyword>
<keyword id="KW-0808">Transferase</keyword>
<organism>
    <name type="scientific">Streptomyces olivaceus</name>
    <dbReference type="NCBI Taxonomy" id="47716"/>
    <lineage>
        <taxon>Bacteria</taxon>
        <taxon>Bacillati</taxon>
        <taxon>Actinomycetota</taxon>
        <taxon>Actinomycetes</taxon>
        <taxon>Kitasatosporales</taxon>
        <taxon>Streptomycetaceae</taxon>
        <taxon>Streptomyces</taxon>
    </lineage>
</organism>
<dbReference type="EC" id="2.1.1.305" evidence="2"/>
<dbReference type="EMBL" id="AJ300305">
    <property type="protein sequence ID" value="CAD57139.1"/>
    <property type="molecule type" value="Genomic_DNA"/>
</dbReference>
<dbReference type="EMBL" id="AM900040">
    <property type="protein sequence ID" value="CAP12606.1"/>
    <property type="molecule type" value="Genomic_DNA"/>
</dbReference>
<dbReference type="SMR" id="Q9AJU2"/>
<dbReference type="KEGG" id="ag:CAP12606"/>
<dbReference type="BioCyc" id="MetaCyc:MONOMER-18589"/>
<dbReference type="BRENDA" id="2.1.1.305">
    <property type="organism ID" value="6068"/>
</dbReference>
<dbReference type="GO" id="GO:0046872">
    <property type="term" value="F:metal ion binding"/>
    <property type="evidence" value="ECO:0007669"/>
    <property type="project" value="UniProtKB-KW"/>
</dbReference>
<dbReference type="GO" id="GO:0008168">
    <property type="term" value="F:methyltransferase activity"/>
    <property type="evidence" value="ECO:0000314"/>
    <property type="project" value="UniProtKB"/>
</dbReference>
<dbReference type="GO" id="GO:0017000">
    <property type="term" value="P:antibiotic biosynthetic process"/>
    <property type="evidence" value="ECO:0000314"/>
    <property type="project" value="UniProtKB"/>
</dbReference>
<dbReference type="GO" id="GO:0032259">
    <property type="term" value="P:methylation"/>
    <property type="evidence" value="ECO:0000314"/>
    <property type="project" value="UniProtKB"/>
</dbReference>
<dbReference type="Gene3D" id="3.30.1050.30">
    <property type="match status" value="1"/>
</dbReference>
<dbReference type="Gene3D" id="3.40.50.150">
    <property type="entry name" value="Vaccinia Virus protein VP39"/>
    <property type="match status" value="1"/>
</dbReference>
<dbReference type="InterPro" id="IPR040800">
    <property type="entry name" value="MycE_N"/>
</dbReference>
<dbReference type="InterPro" id="IPR029063">
    <property type="entry name" value="SAM-dependent_MTases_sf"/>
</dbReference>
<dbReference type="Pfam" id="PF17843">
    <property type="entry name" value="MycE_N"/>
    <property type="match status" value="1"/>
</dbReference>
<dbReference type="SUPFAM" id="SSF53335">
    <property type="entry name" value="S-adenosyl-L-methionine-dependent methyltransferases"/>
    <property type="match status" value="1"/>
</dbReference>
<proteinExistence type="evidence at protein level"/>
<accession>Q9AJU2</accession>
<feature type="chain" id="PRO_0000430713" description="8-demethyl-8-alpha-L-rhamnosyl tetracenomycin-C 2'-O-methyltransferase">
    <location>
        <begin position="1"/>
        <end position="378"/>
    </location>
</feature>
<feature type="active site" description="Proton acceptor" evidence="1">
    <location>
        <position position="271"/>
    </location>
</feature>
<feature type="binding site" evidence="1">
    <location>
        <begin position="195"/>
        <end position="201"/>
    </location>
    <ligand>
        <name>S-adenosyl-L-methionine</name>
        <dbReference type="ChEBI" id="CHEBI:59789"/>
    </ligand>
</feature>
<feature type="binding site" evidence="1">
    <location>
        <position position="210"/>
    </location>
    <ligand>
        <name>S-adenosyl-L-methionine</name>
        <dbReference type="ChEBI" id="CHEBI:59789"/>
    </ligand>
</feature>
<feature type="binding site" evidence="1">
    <location>
        <position position="227"/>
    </location>
    <ligand>
        <name>S-adenosyl-L-methionine</name>
        <dbReference type="ChEBI" id="CHEBI:59789"/>
    </ligand>
</feature>
<feature type="binding site" evidence="1">
    <location>
        <begin position="245"/>
        <end position="246"/>
    </location>
    <ligand>
        <name>S-adenosyl-L-methionine</name>
        <dbReference type="ChEBI" id="CHEBI:59789"/>
    </ligand>
</feature>
<feature type="binding site" evidence="1">
    <location>
        <position position="268"/>
    </location>
    <ligand>
        <name>Mg(2+)</name>
        <dbReference type="ChEBI" id="CHEBI:18420"/>
    </ligand>
</feature>
<feature type="binding site" evidence="1">
    <location>
        <position position="268"/>
    </location>
    <ligand>
        <name>S-adenosyl-L-methionine</name>
        <dbReference type="ChEBI" id="CHEBI:59789"/>
    </ligand>
</feature>
<feature type="binding site" evidence="1">
    <location>
        <position position="296"/>
    </location>
    <ligand>
        <name>Mg(2+)</name>
        <dbReference type="ChEBI" id="CHEBI:18420"/>
    </ligand>
</feature>
<feature type="binding site" evidence="1">
    <location>
        <position position="297"/>
    </location>
    <ligand>
        <name>Mg(2+)</name>
        <dbReference type="ChEBI" id="CHEBI:18420"/>
    </ligand>
</feature>
<reference key="1">
    <citation type="journal article" date="2001" name="J. Biol. Chem.">
        <title>Deoxysugar methylation during biosynthesis of the antitumor polyketide elloramycin by Streptomyces olivaceus. Characterization of three methyltransferase genes.</title>
        <authorList>
            <person name="Patallo E.P."/>
            <person name="Blanco G."/>
            <person name="Fischer C."/>
            <person name="Brana A.F."/>
            <person name="Rohr J."/>
            <person name="Mendez C."/>
            <person name="Salas J.A."/>
        </authorList>
    </citation>
    <scope>NUCLEOTIDE SEQUENCE [GENOMIC DNA]</scope>
    <scope>FUNCTION</scope>
    <scope>CATALYTIC ACTIVITY</scope>
    <source>
        <strain>Tu 2353</strain>
    </source>
</reference>
<reference key="2">
    <citation type="journal article" date="2008" name="Microbiology">
        <title>Biosynthesis of elloramycin in Streptomyces olivaceus requires glycosylation by enzymes encoded outside the aglycon cluster.</title>
        <authorList>
            <person name="Ramos A."/>
            <person name="Lombo F."/>
            <person name="Brana A.F."/>
            <person name="Rohr J."/>
            <person name="Mendez C."/>
            <person name="Salas J.A."/>
        </authorList>
    </citation>
    <scope>NUCLEOTIDE SEQUENCE [GENOMIC DNA]</scope>
    <source>
        <strain>Tu 2353</strain>
    </source>
</reference>
<name>ELMM1_STROV</name>
<evidence type="ECO:0000250" key="1">
    <source>
        <dbReference type="UniProtKB" id="Q83WF2"/>
    </source>
</evidence>
<evidence type="ECO:0000269" key="2">
    <source>
    </source>
</evidence>
<evidence type="ECO:0000303" key="3">
    <source>
    </source>
</evidence>
<evidence type="ECO:0000305" key="4"/>
<gene>
    <name evidence="3" type="primary">elmMI</name>
</gene>